<organism>
    <name type="scientific">Staphylococcus aureus (strain Mu3 / ATCC 700698)</name>
    <dbReference type="NCBI Taxonomy" id="418127"/>
    <lineage>
        <taxon>Bacteria</taxon>
        <taxon>Bacillati</taxon>
        <taxon>Bacillota</taxon>
        <taxon>Bacilli</taxon>
        <taxon>Bacillales</taxon>
        <taxon>Staphylococcaceae</taxon>
        <taxon>Staphylococcus</taxon>
    </lineage>
</organism>
<comment type="similarity">
    <text evidence="1">Belongs to the UPF0741 family.</text>
</comment>
<keyword id="KW-0175">Coiled coil</keyword>
<proteinExistence type="inferred from homology"/>
<reference key="1">
    <citation type="journal article" date="2008" name="Antimicrob. Agents Chemother.">
        <title>Mutated response regulator graR is responsible for phenotypic conversion of Staphylococcus aureus from heterogeneous vancomycin-intermediate resistance to vancomycin-intermediate resistance.</title>
        <authorList>
            <person name="Neoh H.-M."/>
            <person name="Cui L."/>
            <person name="Yuzawa H."/>
            <person name="Takeuchi F."/>
            <person name="Matsuo M."/>
            <person name="Hiramatsu K."/>
        </authorList>
    </citation>
    <scope>NUCLEOTIDE SEQUENCE [LARGE SCALE GENOMIC DNA]</scope>
    <source>
        <strain>Mu3 / ATCC 700698</strain>
    </source>
</reference>
<evidence type="ECO:0000255" key="1">
    <source>
        <dbReference type="HAMAP-Rule" id="MF_01863"/>
    </source>
</evidence>
<evidence type="ECO:0000256" key="2">
    <source>
        <dbReference type="SAM" id="MobiDB-lite"/>
    </source>
</evidence>
<feature type="chain" id="PRO_0000372751" description="UPF0741 protein SAHV_0591">
    <location>
        <begin position="1"/>
        <end position="113"/>
    </location>
</feature>
<feature type="region of interest" description="Disordered" evidence="2">
    <location>
        <begin position="68"/>
        <end position="113"/>
    </location>
</feature>
<feature type="coiled-coil region" evidence="1">
    <location>
        <begin position="78"/>
        <end position="113"/>
    </location>
</feature>
<feature type="compositionally biased region" description="Basic residues" evidence="2">
    <location>
        <begin position="85"/>
        <end position="94"/>
    </location>
</feature>
<feature type="compositionally biased region" description="Basic and acidic residues" evidence="2">
    <location>
        <begin position="95"/>
        <end position="113"/>
    </location>
</feature>
<gene>
    <name type="ordered locus">SAHV_0591</name>
</gene>
<name>Y591_STAA1</name>
<dbReference type="EMBL" id="AP009324">
    <property type="protein sequence ID" value="BAF77474.1"/>
    <property type="molecule type" value="Genomic_DNA"/>
</dbReference>
<dbReference type="RefSeq" id="WP_000798967.1">
    <property type="nucleotide sequence ID" value="NZ_CTYB01000040.1"/>
</dbReference>
<dbReference type="SMR" id="A7WZ38"/>
<dbReference type="KEGG" id="saw:SAHV_0591"/>
<dbReference type="HOGENOM" id="CLU_2156795_0_0_9"/>
<dbReference type="HAMAP" id="MF_01863">
    <property type="entry name" value="UPF0741"/>
    <property type="match status" value="1"/>
</dbReference>
<dbReference type="InterPro" id="IPR009910">
    <property type="entry name" value="DUF1450"/>
</dbReference>
<dbReference type="InterPro" id="IPR020880">
    <property type="entry name" value="UPF0741"/>
</dbReference>
<dbReference type="Pfam" id="PF07293">
    <property type="entry name" value="DUF1450"/>
    <property type="match status" value="1"/>
</dbReference>
<protein>
    <recommendedName>
        <fullName evidence="1">UPF0741 protein SAHV_0591</fullName>
    </recommendedName>
</protein>
<sequence length="113" mass="13536">MKNTFLICDECQAVNIRTLQKKLEKLDPDAEIVIGCQSYCGPGRRKTFTFVNNRPLAALTEEELIEKVSQQLKKPRDPEEEERLRKRHEERKRRKEEQDRKLKEKLEKRKAQQ</sequence>
<accession>A7WZ38</accession>